<reference key="1">
    <citation type="submission" date="2007-12" db="EMBL/GenBank/DDBJ databases">
        <title>Brucella suis ATCC 23445 whole genome shotgun sequencing project.</title>
        <authorList>
            <person name="Setubal J.C."/>
            <person name="Bowns C."/>
            <person name="Boyle S."/>
            <person name="Crasta O.R."/>
            <person name="Czar M.J."/>
            <person name="Dharmanolla C."/>
            <person name="Gillespie J.J."/>
            <person name="Kenyon R.W."/>
            <person name="Lu J."/>
            <person name="Mane S."/>
            <person name="Mohapatra S."/>
            <person name="Nagrani S."/>
            <person name="Purkayastha A."/>
            <person name="Rajasimha H.K."/>
            <person name="Shallom J.M."/>
            <person name="Shallom S."/>
            <person name="Shukla M."/>
            <person name="Snyder E.E."/>
            <person name="Sobral B.W."/>
            <person name="Wattam A.R."/>
            <person name="Will R."/>
            <person name="Williams K."/>
            <person name="Yoo H."/>
            <person name="Bruce D."/>
            <person name="Detter C."/>
            <person name="Munk C."/>
            <person name="Brettin T.S."/>
        </authorList>
    </citation>
    <scope>NUCLEOTIDE SEQUENCE [LARGE SCALE GENOMIC DNA]</scope>
    <source>
        <strain>ATCC 23445 / NCTC 10510</strain>
    </source>
</reference>
<evidence type="ECO:0000255" key="1">
    <source>
        <dbReference type="HAMAP-Rule" id="MF_01374"/>
    </source>
</evidence>
<protein>
    <recommendedName>
        <fullName evidence="1">Hydroxyacylglutathione hydrolase</fullName>
        <ecNumber evidence="1">3.1.2.6</ecNumber>
    </recommendedName>
    <alternativeName>
        <fullName evidence="1">Glyoxalase II</fullName>
        <shortName evidence="1">Glx II</shortName>
    </alternativeName>
</protein>
<dbReference type="EC" id="3.1.2.6" evidence="1"/>
<dbReference type="EMBL" id="CP000911">
    <property type="protein sequence ID" value="ABY38793.1"/>
    <property type="molecule type" value="Genomic_DNA"/>
</dbReference>
<dbReference type="RefSeq" id="WP_002965004.1">
    <property type="nucleotide sequence ID" value="NC_010169.1"/>
</dbReference>
<dbReference type="SMR" id="B0CIU0"/>
<dbReference type="GeneID" id="97534780"/>
<dbReference type="KEGG" id="bmt:BSUIS_A1776"/>
<dbReference type="HOGENOM" id="CLU_030571_4_1_5"/>
<dbReference type="UniPathway" id="UPA00619">
    <property type="reaction ID" value="UER00676"/>
</dbReference>
<dbReference type="Proteomes" id="UP000008545">
    <property type="component" value="Chromosome I"/>
</dbReference>
<dbReference type="GO" id="GO:0004416">
    <property type="term" value="F:hydroxyacylglutathione hydrolase activity"/>
    <property type="evidence" value="ECO:0007669"/>
    <property type="project" value="UniProtKB-UniRule"/>
</dbReference>
<dbReference type="GO" id="GO:0046872">
    <property type="term" value="F:metal ion binding"/>
    <property type="evidence" value="ECO:0007669"/>
    <property type="project" value="UniProtKB-KW"/>
</dbReference>
<dbReference type="GO" id="GO:0019243">
    <property type="term" value="P:methylglyoxal catabolic process to D-lactate via S-lactoyl-glutathione"/>
    <property type="evidence" value="ECO:0007669"/>
    <property type="project" value="InterPro"/>
</dbReference>
<dbReference type="CDD" id="cd07723">
    <property type="entry name" value="hydroxyacylglutathione_hydrolase_MBL-fold"/>
    <property type="match status" value="1"/>
</dbReference>
<dbReference type="Gene3D" id="3.60.15.10">
    <property type="entry name" value="Ribonuclease Z/Hydroxyacylglutathione hydrolase-like"/>
    <property type="match status" value="1"/>
</dbReference>
<dbReference type="HAMAP" id="MF_01374">
    <property type="entry name" value="Glyoxalase_2"/>
    <property type="match status" value="1"/>
</dbReference>
<dbReference type="InterPro" id="IPR035680">
    <property type="entry name" value="Clx_II_MBL"/>
</dbReference>
<dbReference type="InterPro" id="IPR050110">
    <property type="entry name" value="Glyoxalase_II_hydrolase"/>
</dbReference>
<dbReference type="InterPro" id="IPR032282">
    <property type="entry name" value="HAGH_C"/>
</dbReference>
<dbReference type="InterPro" id="IPR017782">
    <property type="entry name" value="Hydroxyacylglutathione_Hdrlase"/>
</dbReference>
<dbReference type="InterPro" id="IPR001279">
    <property type="entry name" value="Metallo-B-lactamas"/>
</dbReference>
<dbReference type="InterPro" id="IPR036866">
    <property type="entry name" value="RibonucZ/Hydroxyglut_hydro"/>
</dbReference>
<dbReference type="NCBIfam" id="TIGR03413">
    <property type="entry name" value="GSH_gloB"/>
    <property type="match status" value="1"/>
</dbReference>
<dbReference type="PANTHER" id="PTHR43705">
    <property type="entry name" value="HYDROXYACYLGLUTATHIONE HYDROLASE"/>
    <property type="match status" value="1"/>
</dbReference>
<dbReference type="PANTHER" id="PTHR43705:SF1">
    <property type="entry name" value="HYDROXYACYLGLUTATHIONE HYDROLASE GLOB"/>
    <property type="match status" value="1"/>
</dbReference>
<dbReference type="Pfam" id="PF16123">
    <property type="entry name" value="HAGH_C"/>
    <property type="match status" value="1"/>
</dbReference>
<dbReference type="Pfam" id="PF00753">
    <property type="entry name" value="Lactamase_B"/>
    <property type="match status" value="1"/>
</dbReference>
<dbReference type="PIRSF" id="PIRSF005457">
    <property type="entry name" value="Glx"/>
    <property type="match status" value="1"/>
</dbReference>
<dbReference type="SMART" id="SM00849">
    <property type="entry name" value="Lactamase_B"/>
    <property type="match status" value="1"/>
</dbReference>
<dbReference type="SUPFAM" id="SSF56281">
    <property type="entry name" value="Metallo-hydrolase/oxidoreductase"/>
    <property type="match status" value="1"/>
</dbReference>
<keyword id="KW-0378">Hydrolase</keyword>
<keyword id="KW-0479">Metal-binding</keyword>
<keyword id="KW-0862">Zinc</keyword>
<gene>
    <name evidence="1" type="primary">gloB</name>
    <name type="ordered locus">BSUIS_A1776</name>
</gene>
<sequence length="260" mass="29140">MHRMEQRLEIEQFICRSDNYGVLIHDPESALTATIDAPDAYAIEAALERRGWTLDFIFTTHHHLDHVEGNEPLKEKFGVSIIGPEAEKAKIPGIDRTVKGGDEFTFGLFKVKVISTPGHTAGGISYYLPDAKVVFTGDTLFALGCGRLFEGTPATMFHSLEKLVALPGDTALYCGHEYTQNNARFALTIDPDNSALKERAKEIARLRAHERMTLPSTIALEMATNPFLRWHDRTIRARLGLQDAPDEAVFAEIRKRKDMF</sequence>
<accession>B0CIU0</accession>
<proteinExistence type="inferred from homology"/>
<name>GLO2_BRUSI</name>
<organism>
    <name type="scientific">Brucella suis (strain ATCC 23445 / NCTC 10510)</name>
    <dbReference type="NCBI Taxonomy" id="470137"/>
    <lineage>
        <taxon>Bacteria</taxon>
        <taxon>Pseudomonadati</taxon>
        <taxon>Pseudomonadota</taxon>
        <taxon>Alphaproteobacteria</taxon>
        <taxon>Hyphomicrobiales</taxon>
        <taxon>Brucellaceae</taxon>
        <taxon>Brucella/Ochrobactrum group</taxon>
        <taxon>Brucella</taxon>
    </lineage>
</organism>
<comment type="function">
    <text evidence="1">Thiolesterase that catalyzes the hydrolysis of S-D-lactoyl-glutathione to form glutathione and D-lactic acid.</text>
</comment>
<comment type="catalytic activity">
    <reaction evidence="1">
        <text>an S-(2-hydroxyacyl)glutathione + H2O = a 2-hydroxy carboxylate + glutathione + H(+)</text>
        <dbReference type="Rhea" id="RHEA:21864"/>
        <dbReference type="ChEBI" id="CHEBI:15377"/>
        <dbReference type="ChEBI" id="CHEBI:15378"/>
        <dbReference type="ChEBI" id="CHEBI:57925"/>
        <dbReference type="ChEBI" id="CHEBI:58896"/>
        <dbReference type="ChEBI" id="CHEBI:71261"/>
        <dbReference type="EC" id="3.1.2.6"/>
    </reaction>
</comment>
<comment type="cofactor">
    <cofactor evidence="1">
        <name>Zn(2+)</name>
        <dbReference type="ChEBI" id="CHEBI:29105"/>
    </cofactor>
    <text evidence="1">Binds 2 Zn(2+) ions per subunit.</text>
</comment>
<comment type="pathway">
    <text evidence="1">Secondary metabolite metabolism; methylglyoxal degradation; (R)-lactate from methylglyoxal: step 2/2.</text>
</comment>
<comment type="subunit">
    <text evidence="1">Monomer.</text>
</comment>
<comment type="similarity">
    <text evidence="1">Belongs to the metallo-beta-lactamase superfamily. Glyoxalase II family.</text>
</comment>
<feature type="chain" id="PRO_1000087278" description="Hydroxyacylglutathione hydrolase">
    <location>
        <begin position="1"/>
        <end position="260"/>
    </location>
</feature>
<feature type="binding site" evidence="1">
    <location>
        <position position="61"/>
    </location>
    <ligand>
        <name>Zn(2+)</name>
        <dbReference type="ChEBI" id="CHEBI:29105"/>
        <label>1</label>
    </ligand>
</feature>
<feature type="binding site" evidence="1">
    <location>
        <position position="63"/>
    </location>
    <ligand>
        <name>Zn(2+)</name>
        <dbReference type="ChEBI" id="CHEBI:29105"/>
        <label>1</label>
    </ligand>
</feature>
<feature type="binding site" evidence="1">
    <location>
        <position position="65"/>
    </location>
    <ligand>
        <name>Zn(2+)</name>
        <dbReference type="ChEBI" id="CHEBI:29105"/>
        <label>2</label>
    </ligand>
</feature>
<feature type="binding site" evidence="1">
    <location>
        <position position="66"/>
    </location>
    <ligand>
        <name>Zn(2+)</name>
        <dbReference type="ChEBI" id="CHEBI:29105"/>
        <label>2</label>
    </ligand>
</feature>
<feature type="binding site" evidence="1">
    <location>
        <position position="119"/>
    </location>
    <ligand>
        <name>Zn(2+)</name>
        <dbReference type="ChEBI" id="CHEBI:29105"/>
        <label>1</label>
    </ligand>
</feature>
<feature type="binding site" evidence="1">
    <location>
        <position position="138"/>
    </location>
    <ligand>
        <name>Zn(2+)</name>
        <dbReference type="ChEBI" id="CHEBI:29105"/>
        <label>1</label>
    </ligand>
</feature>
<feature type="binding site" evidence="1">
    <location>
        <position position="138"/>
    </location>
    <ligand>
        <name>Zn(2+)</name>
        <dbReference type="ChEBI" id="CHEBI:29105"/>
        <label>2</label>
    </ligand>
</feature>
<feature type="binding site" evidence="1">
    <location>
        <position position="176"/>
    </location>
    <ligand>
        <name>Zn(2+)</name>
        <dbReference type="ChEBI" id="CHEBI:29105"/>
        <label>2</label>
    </ligand>
</feature>